<comment type="function">
    <text evidence="2">Cell wall formation.</text>
</comment>
<comment type="catalytic activity">
    <reaction evidence="2">
        <text>2 D-alanine + ATP = D-alanyl-D-alanine + ADP + phosphate + H(+)</text>
        <dbReference type="Rhea" id="RHEA:11224"/>
        <dbReference type="ChEBI" id="CHEBI:15378"/>
        <dbReference type="ChEBI" id="CHEBI:30616"/>
        <dbReference type="ChEBI" id="CHEBI:43474"/>
        <dbReference type="ChEBI" id="CHEBI:57416"/>
        <dbReference type="ChEBI" id="CHEBI:57822"/>
        <dbReference type="ChEBI" id="CHEBI:456216"/>
        <dbReference type="EC" id="6.3.2.4"/>
    </reaction>
</comment>
<comment type="cofactor">
    <cofactor evidence="1">
        <name>Mg(2+)</name>
        <dbReference type="ChEBI" id="CHEBI:18420"/>
    </cofactor>
    <cofactor evidence="1">
        <name>Mn(2+)</name>
        <dbReference type="ChEBI" id="CHEBI:29035"/>
    </cofactor>
    <text evidence="1">Binds 2 magnesium or manganese ions per subunit.</text>
</comment>
<comment type="pathway">
    <text evidence="2">Cell wall biogenesis; peptidoglycan biosynthesis.</text>
</comment>
<comment type="subcellular location">
    <subcellularLocation>
        <location evidence="2">Cytoplasm</location>
    </subcellularLocation>
</comment>
<comment type="similarity">
    <text evidence="2">Belongs to the D-alanine--D-alanine ligase family.</text>
</comment>
<keyword id="KW-0002">3D-structure</keyword>
<keyword id="KW-0067">ATP-binding</keyword>
<keyword id="KW-0133">Cell shape</keyword>
<keyword id="KW-0961">Cell wall biogenesis/degradation</keyword>
<keyword id="KW-0963">Cytoplasm</keyword>
<keyword id="KW-0436">Ligase</keyword>
<keyword id="KW-0460">Magnesium</keyword>
<keyword id="KW-0464">Manganese</keyword>
<keyword id="KW-0479">Metal-binding</keyword>
<keyword id="KW-0547">Nucleotide-binding</keyword>
<keyword id="KW-0573">Peptidoglycan synthesis</keyword>
<keyword id="KW-1185">Reference proteome</keyword>
<dbReference type="EC" id="6.3.2.4" evidence="2"/>
<dbReference type="EMBL" id="AE003853">
    <property type="protein sequence ID" value="AAF96474.1"/>
    <property type="molecule type" value="Genomic_DNA"/>
</dbReference>
<dbReference type="PIR" id="A82443">
    <property type="entry name" value="A82443"/>
</dbReference>
<dbReference type="RefSeq" id="NP_232962.1">
    <property type="nucleotide sequence ID" value="NC_002506.1"/>
</dbReference>
<dbReference type="RefSeq" id="WP_000169444.1">
    <property type="nucleotide sequence ID" value="NZ_LT906615.1"/>
</dbReference>
<dbReference type="PDB" id="6DGI">
    <property type="method" value="X-ray"/>
    <property type="resolution" value="2.30 A"/>
    <property type="chains" value="A/B=1-334"/>
</dbReference>
<dbReference type="PDBsum" id="6DGI"/>
<dbReference type="SMR" id="Q9KM17"/>
<dbReference type="STRING" id="243277.VC_A0572"/>
<dbReference type="DNASU" id="2612376"/>
<dbReference type="EnsemblBacteria" id="AAF96474">
    <property type="protein sequence ID" value="AAF96474"/>
    <property type="gene ID" value="VC_A0572"/>
</dbReference>
<dbReference type="KEGG" id="vch:VC_A0572"/>
<dbReference type="PATRIC" id="fig|243277.26.peg.3199"/>
<dbReference type="eggNOG" id="COG1181">
    <property type="taxonomic scope" value="Bacteria"/>
</dbReference>
<dbReference type="HOGENOM" id="CLU_039268_0_0_6"/>
<dbReference type="UniPathway" id="UPA00219"/>
<dbReference type="Proteomes" id="UP000000584">
    <property type="component" value="Chromosome 2"/>
</dbReference>
<dbReference type="GO" id="GO:0005829">
    <property type="term" value="C:cytosol"/>
    <property type="evidence" value="ECO:0000318"/>
    <property type="project" value="GO_Central"/>
</dbReference>
<dbReference type="GO" id="GO:0005524">
    <property type="term" value="F:ATP binding"/>
    <property type="evidence" value="ECO:0007669"/>
    <property type="project" value="UniProtKB-KW"/>
</dbReference>
<dbReference type="GO" id="GO:0008716">
    <property type="term" value="F:D-alanine-D-alanine ligase activity"/>
    <property type="evidence" value="ECO:0000318"/>
    <property type="project" value="GO_Central"/>
</dbReference>
<dbReference type="GO" id="GO:0046872">
    <property type="term" value="F:metal ion binding"/>
    <property type="evidence" value="ECO:0007669"/>
    <property type="project" value="UniProtKB-KW"/>
</dbReference>
<dbReference type="GO" id="GO:0071555">
    <property type="term" value="P:cell wall organization"/>
    <property type="evidence" value="ECO:0007669"/>
    <property type="project" value="UniProtKB-KW"/>
</dbReference>
<dbReference type="GO" id="GO:0009252">
    <property type="term" value="P:peptidoglycan biosynthetic process"/>
    <property type="evidence" value="ECO:0000318"/>
    <property type="project" value="GO_Central"/>
</dbReference>
<dbReference type="GO" id="GO:0008360">
    <property type="term" value="P:regulation of cell shape"/>
    <property type="evidence" value="ECO:0007669"/>
    <property type="project" value="UniProtKB-KW"/>
</dbReference>
<dbReference type="FunFam" id="3.30.1490.20:FF:000034">
    <property type="entry name" value="D-alanine--D-alanine ligase"/>
    <property type="match status" value="1"/>
</dbReference>
<dbReference type="FunFam" id="3.30.470.20:FF:000088">
    <property type="entry name" value="D-alanine--D-alanine ligase"/>
    <property type="match status" value="1"/>
</dbReference>
<dbReference type="FunFam" id="3.40.50.20:FF:000034">
    <property type="entry name" value="D-alanine--D-alanine ligase"/>
    <property type="match status" value="1"/>
</dbReference>
<dbReference type="Gene3D" id="3.40.50.20">
    <property type="match status" value="1"/>
</dbReference>
<dbReference type="Gene3D" id="3.30.1490.20">
    <property type="entry name" value="ATP-grasp fold, A domain"/>
    <property type="match status" value="1"/>
</dbReference>
<dbReference type="Gene3D" id="3.30.470.20">
    <property type="entry name" value="ATP-grasp fold, B domain"/>
    <property type="match status" value="1"/>
</dbReference>
<dbReference type="HAMAP" id="MF_00047">
    <property type="entry name" value="Dala_Dala_lig"/>
    <property type="match status" value="1"/>
</dbReference>
<dbReference type="InterPro" id="IPR011761">
    <property type="entry name" value="ATP-grasp"/>
</dbReference>
<dbReference type="InterPro" id="IPR013815">
    <property type="entry name" value="ATP_grasp_subdomain_1"/>
</dbReference>
<dbReference type="InterPro" id="IPR000291">
    <property type="entry name" value="D-Ala_lig_Van_CS"/>
</dbReference>
<dbReference type="InterPro" id="IPR005905">
    <property type="entry name" value="D_ala_D_ala"/>
</dbReference>
<dbReference type="InterPro" id="IPR011095">
    <property type="entry name" value="Dala_Dala_lig_C"/>
</dbReference>
<dbReference type="InterPro" id="IPR011127">
    <property type="entry name" value="Dala_Dala_lig_N"/>
</dbReference>
<dbReference type="InterPro" id="IPR016185">
    <property type="entry name" value="PreATP-grasp_dom_sf"/>
</dbReference>
<dbReference type="NCBIfam" id="TIGR01205">
    <property type="entry name" value="D_ala_D_alaTIGR"/>
    <property type="match status" value="1"/>
</dbReference>
<dbReference type="NCBIfam" id="NF002527">
    <property type="entry name" value="PRK01966.1-3"/>
    <property type="match status" value="1"/>
</dbReference>
<dbReference type="NCBIfam" id="NF002528">
    <property type="entry name" value="PRK01966.1-4"/>
    <property type="match status" value="1"/>
</dbReference>
<dbReference type="PANTHER" id="PTHR23132">
    <property type="entry name" value="D-ALANINE--D-ALANINE LIGASE"/>
    <property type="match status" value="1"/>
</dbReference>
<dbReference type="PANTHER" id="PTHR23132:SF25">
    <property type="entry name" value="D-ALANINE--D-ALANINE LIGASE A"/>
    <property type="match status" value="1"/>
</dbReference>
<dbReference type="Pfam" id="PF07478">
    <property type="entry name" value="Dala_Dala_lig_C"/>
    <property type="match status" value="1"/>
</dbReference>
<dbReference type="Pfam" id="PF01820">
    <property type="entry name" value="Dala_Dala_lig_N"/>
    <property type="match status" value="1"/>
</dbReference>
<dbReference type="PIRSF" id="PIRSF039102">
    <property type="entry name" value="Ddl/VanB"/>
    <property type="match status" value="1"/>
</dbReference>
<dbReference type="SUPFAM" id="SSF56059">
    <property type="entry name" value="Glutathione synthetase ATP-binding domain-like"/>
    <property type="match status" value="1"/>
</dbReference>
<dbReference type="SUPFAM" id="SSF52440">
    <property type="entry name" value="PreATP-grasp domain"/>
    <property type="match status" value="1"/>
</dbReference>
<dbReference type="PROSITE" id="PS50975">
    <property type="entry name" value="ATP_GRASP"/>
    <property type="match status" value="1"/>
</dbReference>
<dbReference type="PROSITE" id="PS00843">
    <property type="entry name" value="DALA_DALA_LIGASE_1"/>
    <property type="match status" value="1"/>
</dbReference>
<dbReference type="PROSITE" id="PS00844">
    <property type="entry name" value="DALA_DALA_LIGASE_2"/>
    <property type="match status" value="1"/>
</dbReference>
<proteinExistence type="evidence at protein level"/>
<evidence type="ECO:0000250" key="1"/>
<evidence type="ECO:0000255" key="2">
    <source>
        <dbReference type="HAMAP-Rule" id="MF_00047"/>
    </source>
</evidence>
<evidence type="ECO:0007829" key="3">
    <source>
        <dbReference type="PDB" id="6DGI"/>
    </source>
</evidence>
<protein>
    <recommendedName>
        <fullName evidence="2">D-alanine--D-alanine ligase</fullName>
        <ecNumber evidence="2">6.3.2.4</ecNumber>
    </recommendedName>
    <alternativeName>
        <fullName evidence="2">D-Ala-D-Ala ligase</fullName>
    </alternativeName>
    <alternativeName>
        <fullName evidence="2">D-alanylalanine synthetase</fullName>
    </alternativeName>
</protein>
<gene>
    <name evidence="2" type="primary">ddl</name>
    <name type="ordered locus">VC_A0572</name>
</gene>
<organism>
    <name type="scientific">Vibrio cholerae serotype O1 (strain ATCC 39315 / El Tor Inaba N16961)</name>
    <dbReference type="NCBI Taxonomy" id="243277"/>
    <lineage>
        <taxon>Bacteria</taxon>
        <taxon>Pseudomonadati</taxon>
        <taxon>Pseudomonadota</taxon>
        <taxon>Gammaproteobacteria</taxon>
        <taxon>Vibrionales</taxon>
        <taxon>Vibrionaceae</taxon>
        <taxon>Vibrio</taxon>
    </lineage>
</organism>
<reference key="1">
    <citation type="journal article" date="2000" name="Nature">
        <title>DNA sequence of both chromosomes of the cholera pathogen Vibrio cholerae.</title>
        <authorList>
            <person name="Heidelberg J.F."/>
            <person name="Eisen J.A."/>
            <person name="Nelson W.C."/>
            <person name="Clayton R.A."/>
            <person name="Gwinn M.L."/>
            <person name="Dodson R.J."/>
            <person name="Haft D.H."/>
            <person name="Hickey E.K."/>
            <person name="Peterson J.D."/>
            <person name="Umayam L.A."/>
            <person name="Gill S.R."/>
            <person name="Nelson K.E."/>
            <person name="Read T.D."/>
            <person name="Tettelin H."/>
            <person name="Richardson D.L."/>
            <person name="Ermolaeva M.D."/>
            <person name="Vamathevan J.J."/>
            <person name="Bass S."/>
            <person name="Qin H."/>
            <person name="Dragoi I."/>
            <person name="Sellers P."/>
            <person name="McDonald L.A."/>
            <person name="Utterback T.R."/>
            <person name="Fleischmann R.D."/>
            <person name="Nierman W.C."/>
            <person name="White O."/>
            <person name="Salzberg S.L."/>
            <person name="Smith H.O."/>
            <person name="Colwell R.R."/>
            <person name="Mekalanos J.J."/>
            <person name="Venter J.C."/>
            <person name="Fraser C.M."/>
        </authorList>
    </citation>
    <scope>NUCLEOTIDE SEQUENCE [LARGE SCALE GENOMIC DNA]</scope>
    <source>
        <strain>ATCC 39315 / El Tor Inaba N16961</strain>
    </source>
</reference>
<sequence>MTKTTILLLCGGGSSEHEISLVSANYIQQQLELTPEFHVIRVEMKKEGWFSEQGALVYLDTNSATLNSDKASYPIDFVVPCIHGFPGETGDIQSMLELAGIPYLGCGPEASANSFNKITSKLWYDALDIPNTPYLFLTQNTPSSIDKAKQAFGHWGSIFVKAARQGSSVGCYKVTTEDQIAPAIEAAFGFSEQVLVEQAVKPRELEVSAYEMNGKLYISKPGEVIAPEGTFYSYEEKYSANSHARTVLEAENLTEKHKELIQTYAERVFIHMKLRHLSRIDFFLTQEGQIYLNEVNTFPGMTPISMFPKMLEHNGHRFSEFLVQCVTNTLVNAK</sequence>
<accession>Q9KM17</accession>
<feature type="chain" id="PRO_0000177901" description="D-alanine--D-alanine ligase">
    <location>
        <begin position="1"/>
        <end position="334"/>
    </location>
</feature>
<feature type="domain" description="ATP-grasp" evidence="2">
    <location>
        <begin position="121"/>
        <end position="327"/>
    </location>
</feature>
<feature type="binding site" evidence="2">
    <location>
        <begin position="151"/>
        <end position="206"/>
    </location>
    <ligand>
        <name>ATP</name>
        <dbReference type="ChEBI" id="CHEBI:30616"/>
    </ligand>
</feature>
<feature type="binding site" evidence="2">
    <location>
        <position position="281"/>
    </location>
    <ligand>
        <name>Mg(2+)</name>
        <dbReference type="ChEBI" id="CHEBI:18420"/>
        <label>1</label>
    </ligand>
</feature>
<feature type="binding site" evidence="2">
    <location>
        <position position="294"/>
    </location>
    <ligand>
        <name>Mg(2+)</name>
        <dbReference type="ChEBI" id="CHEBI:18420"/>
        <label>1</label>
    </ligand>
</feature>
<feature type="binding site" evidence="2">
    <location>
        <position position="294"/>
    </location>
    <ligand>
        <name>Mg(2+)</name>
        <dbReference type="ChEBI" id="CHEBI:18420"/>
        <label>2</label>
    </ligand>
</feature>
<feature type="binding site" evidence="2">
    <location>
        <position position="296"/>
    </location>
    <ligand>
        <name>Mg(2+)</name>
        <dbReference type="ChEBI" id="CHEBI:18420"/>
        <label>2</label>
    </ligand>
</feature>
<feature type="strand" evidence="3">
    <location>
        <begin position="4"/>
        <end position="11"/>
    </location>
</feature>
<feature type="helix" evidence="3">
    <location>
        <begin position="17"/>
        <end position="31"/>
    </location>
</feature>
<feature type="strand" evidence="3">
    <location>
        <begin position="37"/>
        <end position="45"/>
    </location>
</feature>
<feature type="strand" evidence="3">
    <location>
        <begin position="48"/>
        <end position="51"/>
    </location>
</feature>
<feature type="strand" evidence="3">
    <location>
        <begin position="56"/>
        <end position="60"/>
    </location>
</feature>
<feature type="turn" evidence="3">
    <location>
        <begin position="61"/>
        <end position="64"/>
    </location>
</feature>
<feature type="strand" evidence="3">
    <location>
        <begin position="65"/>
        <end position="67"/>
    </location>
</feature>
<feature type="strand" evidence="3">
    <location>
        <begin position="72"/>
        <end position="74"/>
    </location>
</feature>
<feature type="strand" evidence="3">
    <location>
        <begin position="76"/>
        <end position="81"/>
    </location>
</feature>
<feature type="turn" evidence="3">
    <location>
        <begin position="85"/>
        <end position="90"/>
    </location>
</feature>
<feature type="helix" evidence="3">
    <location>
        <begin position="91"/>
        <end position="99"/>
    </location>
</feature>
<feature type="strand" evidence="3">
    <location>
        <begin position="103"/>
        <end position="105"/>
    </location>
</feature>
<feature type="helix" evidence="3">
    <location>
        <begin position="108"/>
        <end position="115"/>
    </location>
</feature>
<feature type="helix" evidence="3">
    <location>
        <begin position="117"/>
        <end position="126"/>
    </location>
</feature>
<feature type="strand" evidence="3">
    <location>
        <begin position="134"/>
        <end position="137"/>
    </location>
</feature>
<feature type="helix" evidence="3">
    <location>
        <begin position="142"/>
        <end position="155"/>
    </location>
</feature>
<feature type="strand" evidence="3">
    <location>
        <begin position="156"/>
        <end position="162"/>
    </location>
</feature>
<feature type="strand" evidence="3">
    <location>
        <begin position="171"/>
        <end position="174"/>
    </location>
</feature>
<feature type="helix" evidence="3">
    <location>
        <begin position="177"/>
        <end position="179"/>
    </location>
</feature>
<feature type="helix" evidence="3">
    <location>
        <begin position="180"/>
        <end position="188"/>
    </location>
</feature>
<feature type="strand" evidence="3">
    <location>
        <begin position="192"/>
        <end position="198"/>
    </location>
</feature>
<feature type="strand" evidence="3">
    <location>
        <begin position="203"/>
        <end position="212"/>
    </location>
</feature>
<feature type="strand" evidence="3">
    <location>
        <begin position="215"/>
        <end position="218"/>
    </location>
</feature>
<feature type="strand" evidence="3">
    <location>
        <begin position="222"/>
        <end position="225"/>
    </location>
</feature>
<feature type="turn" evidence="3">
    <location>
        <begin position="229"/>
        <end position="231"/>
    </location>
</feature>
<feature type="helix" evidence="3">
    <location>
        <begin position="234"/>
        <end position="238"/>
    </location>
</feature>
<feature type="strand" evidence="3">
    <location>
        <begin position="245"/>
        <end position="249"/>
    </location>
</feature>
<feature type="helix" evidence="3">
    <location>
        <begin position="255"/>
        <end position="271"/>
    </location>
</feature>
<feature type="strand" evidence="3">
    <location>
        <begin position="276"/>
        <end position="284"/>
    </location>
</feature>
<feature type="strand" evidence="3">
    <location>
        <begin position="290"/>
        <end position="298"/>
    </location>
</feature>
<feature type="helix" evidence="3">
    <location>
        <begin position="306"/>
        <end position="313"/>
    </location>
</feature>
<feature type="helix" evidence="3">
    <location>
        <begin position="318"/>
        <end position="331"/>
    </location>
</feature>
<name>DDL_VIBCH</name>